<organism>
    <name type="scientific">Macrococcus caseolyticus (strain JCSC5402)</name>
    <name type="common">Macrococcoides caseolyticum</name>
    <dbReference type="NCBI Taxonomy" id="458233"/>
    <lineage>
        <taxon>Bacteria</taxon>
        <taxon>Bacillati</taxon>
        <taxon>Bacillota</taxon>
        <taxon>Bacilli</taxon>
        <taxon>Bacillales</taxon>
        <taxon>Staphylococcaceae</taxon>
        <taxon>Macrococcoides</taxon>
    </lineage>
</organism>
<keyword id="KW-0963">Cytoplasm</keyword>
<keyword id="KW-1185">Reference proteome</keyword>
<feature type="chain" id="PRO_1000180976" description="UPF0291 protein MCCL_0996">
    <location>
        <begin position="1"/>
        <end position="78"/>
    </location>
</feature>
<evidence type="ECO:0000255" key="1">
    <source>
        <dbReference type="HAMAP-Rule" id="MF_01103"/>
    </source>
</evidence>
<dbReference type="EMBL" id="AP009484">
    <property type="protein sequence ID" value="BAH17703.1"/>
    <property type="molecule type" value="Genomic_DNA"/>
</dbReference>
<dbReference type="RefSeq" id="WP_012656903.1">
    <property type="nucleotide sequence ID" value="NC_011999.1"/>
</dbReference>
<dbReference type="SMR" id="B9EBU2"/>
<dbReference type="STRING" id="458233.MCCL_0996"/>
<dbReference type="KEGG" id="mcl:MCCL_0996"/>
<dbReference type="eggNOG" id="COG4224">
    <property type="taxonomic scope" value="Bacteria"/>
</dbReference>
<dbReference type="HOGENOM" id="CLU_173137_0_2_9"/>
<dbReference type="OrthoDB" id="390105at2"/>
<dbReference type="Proteomes" id="UP000001383">
    <property type="component" value="Chromosome"/>
</dbReference>
<dbReference type="GO" id="GO:0005737">
    <property type="term" value="C:cytoplasm"/>
    <property type="evidence" value="ECO:0007669"/>
    <property type="project" value="UniProtKB-SubCell"/>
</dbReference>
<dbReference type="Gene3D" id="1.10.287.540">
    <property type="entry name" value="Helix hairpin bin"/>
    <property type="match status" value="1"/>
</dbReference>
<dbReference type="HAMAP" id="MF_01103">
    <property type="entry name" value="UPF0291"/>
    <property type="match status" value="1"/>
</dbReference>
<dbReference type="InterPro" id="IPR009242">
    <property type="entry name" value="DUF896"/>
</dbReference>
<dbReference type="PANTHER" id="PTHR37300">
    <property type="entry name" value="UPF0291 PROTEIN CBO2609/CLC_2481"/>
    <property type="match status" value="1"/>
</dbReference>
<dbReference type="PANTHER" id="PTHR37300:SF1">
    <property type="entry name" value="UPF0291 PROTEIN YNZC"/>
    <property type="match status" value="1"/>
</dbReference>
<dbReference type="Pfam" id="PF05979">
    <property type="entry name" value="DUF896"/>
    <property type="match status" value="1"/>
</dbReference>
<dbReference type="SUPFAM" id="SSF158221">
    <property type="entry name" value="YnzC-like"/>
    <property type="match status" value="1"/>
</dbReference>
<name>Y996_MACCJ</name>
<proteinExistence type="inferred from homology"/>
<reference key="1">
    <citation type="journal article" date="2009" name="J. Bacteriol.">
        <title>Complete genome sequence of Macrococcus caseolyticus strain JCSCS5402, reflecting the ancestral genome of the human-pathogenic staphylococci.</title>
        <authorList>
            <person name="Baba T."/>
            <person name="Kuwahara-Arai K."/>
            <person name="Uchiyama I."/>
            <person name="Takeuchi F."/>
            <person name="Ito T."/>
            <person name="Hiramatsu K."/>
        </authorList>
    </citation>
    <scope>NUCLEOTIDE SEQUENCE [LARGE SCALE GENOMIC DNA]</scope>
    <source>
        <strain>JCSC5402</strain>
    </source>
</reference>
<sequence>MLDENKMKRINELAQKKKATGLTDQEGKEQTLLRKEYLQSFRQSFKKTIENTTVIDPEGNDVTPDKVKEIQKLNNIRK</sequence>
<protein>
    <recommendedName>
        <fullName evidence="1">UPF0291 protein MCCL_0996</fullName>
    </recommendedName>
</protein>
<comment type="subcellular location">
    <subcellularLocation>
        <location evidence="1">Cytoplasm</location>
    </subcellularLocation>
</comment>
<comment type="similarity">
    <text evidence="1">Belongs to the UPF0291 family.</text>
</comment>
<accession>B9EBU2</accession>
<gene>
    <name type="ordered locus">MCCL_0996</name>
</gene>